<dbReference type="EMBL" id="BA000040">
    <property type="protein sequence ID" value="BAC50679.1"/>
    <property type="molecule type" value="Genomic_DNA"/>
</dbReference>
<dbReference type="RefSeq" id="NP_772054.1">
    <property type="nucleotide sequence ID" value="NC_004463.1"/>
</dbReference>
<dbReference type="RefSeq" id="WP_011088163.1">
    <property type="nucleotide sequence ID" value="NZ_CP011360.1"/>
</dbReference>
<dbReference type="SMR" id="Q89J70"/>
<dbReference type="FunCoup" id="Q89J70">
    <property type="interactions" value="875"/>
</dbReference>
<dbReference type="STRING" id="224911.AAV28_24480"/>
<dbReference type="EnsemblBacteria" id="BAC50679">
    <property type="protein sequence ID" value="BAC50679"/>
    <property type="gene ID" value="BAC50679"/>
</dbReference>
<dbReference type="GeneID" id="46492412"/>
<dbReference type="KEGG" id="bja:bll5414"/>
<dbReference type="PATRIC" id="fig|224911.44.peg.5314"/>
<dbReference type="eggNOG" id="COG0081">
    <property type="taxonomic scope" value="Bacteria"/>
</dbReference>
<dbReference type="HOGENOM" id="CLU_062853_0_0_5"/>
<dbReference type="InParanoid" id="Q89J70"/>
<dbReference type="OrthoDB" id="9803740at2"/>
<dbReference type="PhylomeDB" id="Q89J70"/>
<dbReference type="Proteomes" id="UP000002526">
    <property type="component" value="Chromosome"/>
</dbReference>
<dbReference type="GO" id="GO:0022625">
    <property type="term" value="C:cytosolic large ribosomal subunit"/>
    <property type="evidence" value="ECO:0000318"/>
    <property type="project" value="GO_Central"/>
</dbReference>
<dbReference type="GO" id="GO:0019843">
    <property type="term" value="F:rRNA binding"/>
    <property type="evidence" value="ECO:0007669"/>
    <property type="project" value="UniProtKB-UniRule"/>
</dbReference>
<dbReference type="GO" id="GO:0003735">
    <property type="term" value="F:structural constituent of ribosome"/>
    <property type="evidence" value="ECO:0007669"/>
    <property type="project" value="InterPro"/>
</dbReference>
<dbReference type="GO" id="GO:0000049">
    <property type="term" value="F:tRNA binding"/>
    <property type="evidence" value="ECO:0007669"/>
    <property type="project" value="UniProtKB-KW"/>
</dbReference>
<dbReference type="GO" id="GO:0006417">
    <property type="term" value="P:regulation of translation"/>
    <property type="evidence" value="ECO:0007669"/>
    <property type="project" value="UniProtKB-KW"/>
</dbReference>
<dbReference type="GO" id="GO:0006412">
    <property type="term" value="P:translation"/>
    <property type="evidence" value="ECO:0007669"/>
    <property type="project" value="UniProtKB-UniRule"/>
</dbReference>
<dbReference type="CDD" id="cd00403">
    <property type="entry name" value="Ribosomal_L1"/>
    <property type="match status" value="1"/>
</dbReference>
<dbReference type="FunFam" id="3.40.50.790:FF:000001">
    <property type="entry name" value="50S ribosomal protein L1"/>
    <property type="match status" value="1"/>
</dbReference>
<dbReference type="Gene3D" id="3.30.190.20">
    <property type="match status" value="1"/>
</dbReference>
<dbReference type="Gene3D" id="3.40.50.790">
    <property type="match status" value="1"/>
</dbReference>
<dbReference type="HAMAP" id="MF_01318_B">
    <property type="entry name" value="Ribosomal_uL1_B"/>
    <property type="match status" value="1"/>
</dbReference>
<dbReference type="InterPro" id="IPR005878">
    <property type="entry name" value="Ribosom_uL1_bac-type"/>
</dbReference>
<dbReference type="InterPro" id="IPR002143">
    <property type="entry name" value="Ribosomal_uL1"/>
</dbReference>
<dbReference type="InterPro" id="IPR023674">
    <property type="entry name" value="Ribosomal_uL1-like"/>
</dbReference>
<dbReference type="InterPro" id="IPR028364">
    <property type="entry name" value="Ribosomal_uL1/biogenesis"/>
</dbReference>
<dbReference type="InterPro" id="IPR016095">
    <property type="entry name" value="Ribosomal_uL1_3-a/b-sand"/>
</dbReference>
<dbReference type="InterPro" id="IPR023673">
    <property type="entry name" value="Ribosomal_uL1_CS"/>
</dbReference>
<dbReference type="NCBIfam" id="TIGR01169">
    <property type="entry name" value="rplA_bact"/>
    <property type="match status" value="1"/>
</dbReference>
<dbReference type="PANTHER" id="PTHR36427">
    <property type="entry name" value="54S RIBOSOMAL PROTEIN L1, MITOCHONDRIAL"/>
    <property type="match status" value="1"/>
</dbReference>
<dbReference type="PANTHER" id="PTHR36427:SF3">
    <property type="entry name" value="LARGE RIBOSOMAL SUBUNIT PROTEIN UL1M"/>
    <property type="match status" value="1"/>
</dbReference>
<dbReference type="Pfam" id="PF00687">
    <property type="entry name" value="Ribosomal_L1"/>
    <property type="match status" value="1"/>
</dbReference>
<dbReference type="PIRSF" id="PIRSF002155">
    <property type="entry name" value="Ribosomal_L1"/>
    <property type="match status" value="1"/>
</dbReference>
<dbReference type="SUPFAM" id="SSF56808">
    <property type="entry name" value="Ribosomal protein L1"/>
    <property type="match status" value="1"/>
</dbReference>
<dbReference type="PROSITE" id="PS01199">
    <property type="entry name" value="RIBOSOMAL_L1"/>
    <property type="match status" value="1"/>
</dbReference>
<keyword id="KW-1185">Reference proteome</keyword>
<keyword id="KW-0678">Repressor</keyword>
<keyword id="KW-0687">Ribonucleoprotein</keyword>
<keyword id="KW-0689">Ribosomal protein</keyword>
<keyword id="KW-0694">RNA-binding</keyword>
<keyword id="KW-0699">rRNA-binding</keyword>
<keyword id="KW-0810">Translation regulation</keyword>
<keyword id="KW-0820">tRNA-binding</keyword>
<accession>Q89J70</accession>
<feature type="chain" id="PRO_0000125627" description="Large ribosomal subunit protein uL1">
    <location>
        <begin position="1"/>
        <end position="230"/>
    </location>
</feature>
<comment type="function">
    <text evidence="1">Binds directly to 23S rRNA. The L1 stalk is quite mobile in the ribosome, and is involved in E site tRNA release.</text>
</comment>
<comment type="function">
    <text evidence="1">Protein L1 is also a translational repressor protein, it controls the translation of the L11 operon by binding to its mRNA.</text>
</comment>
<comment type="subunit">
    <text evidence="1">Part of the 50S ribosomal subunit.</text>
</comment>
<comment type="similarity">
    <text evidence="1">Belongs to the universal ribosomal protein uL1 family.</text>
</comment>
<organism>
    <name type="scientific">Bradyrhizobium diazoefficiens (strain JCM 10833 / BCRC 13528 / IAM 13628 / NBRC 14792 / USDA 110)</name>
    <dbReference type="NCBI Taxonomy" id="224911"/>
    <lineage>
        <taxon>Bacteria</taxon>
        <taxon>Pseudomonadati</taxon>
        <taxon>Pseudomonadota</taxon>
        <taxon>Alphaproteobacteria</taxon>
        <taxon>Hyphomicrobiales</taxon>
        <taxon>Nitrobacteraceae</taxon>
        <taxon>Bradyrhizobium</taxon>
    </lineage>
</organism>
<name>RL1_BRADU</name>
<sequence>MAIGKRLNKAREGVDREKLYPLAEAIKMVKERAKAKFDETIEVAINLGVDPRHADQMVRGVVTLPNGTGRTLRVGVFARGAKADEAKAAGADVVGAEDLVEKVQNGSIDFDRCIATPDMMPLVGRLGKVLGPRGLMPNPKIGTVTMDVTGAVKGAKGGSVEFRVEKAGILQAGVGKASFSEEKLVENIKALADAVSKAKPAGSKGTYIQRVAVSSTMGPGVKVEPGTILG</sequence>
<evidence type="ECO:0000255" key="1">
    <source>
        <dbReference type="HAMAP-Rule" id="MF_01318"/>
    </source>
</evidence>
<evidence type="ECO:0000305" key="2"/>
<proteinExistence type="inferred from homology"/>
<gene>
    <name evidence="1" type="primary">rplA</name>
    <name type="ordered locus">bll5414</name>
</gene>
<protein>
    <recommendedName>
        <fullName evidence="1">Large ribosomal subunit protein uL1</fullName>
    </recommendedName>
    <alternativeName>
        <fullName evidence="2">50S ribosomal protein L1</fullName>
    </alternativeName>
</protein>
<reference key="1">
    <citation type="journal article" date="2002" name="DNA Res.">
        <title>Complete genomic sequence of nitrogen-fixing symbiotic bacterium Bradyrhizobium japonicum USDA110.</title>
        <authorList>
            <person name="Kaneko T."/>
            <person name="Nakamura Y."/>
            <person name="Sato S."/>
            <person name="Minamisawa K."/>
            <person name="Uchiumi T."/>
            <person name="Sasamoto S."/>
            <person name="Watanabe A."/>
            <person name="Idesawa K."/>
            <person name="Iriguchi M."/>
            <person name="Kawashima K."/>
            <person name="Kohara M."/>
            <person name="Matsumoto M."/>
            <person name="Shimpo S."/>
            <person name="Tsuruoka H."/>
            <person name="Wada T."/>
            <person name="Yamada M."/>
            <person name="Tabata S."/>
        </authorList>
    </citation>
    <scope>NUCLEOTIDE SEQUENCE [LARGE SCALE GENOMIC DNA]</scope>
    <source>
        <strain>JCM 10833 / BCRC 13528 / IAM 13628 / NBRC 14792 / USDA 110</strain>
    </source>
</reference>